<evidence type="ECO:0000250" key="1">
    <source>
        <dbReference type="UniProtKB" id="P31939"/>
    </source>
</evidence>
<evidence type="ECO:0000250" key="2">
    <source>
        <dbReference type="UniProtKB" id="P54113"/>
    </source>
</evidence>
<evidence type="ECO:0000255" key="3">
    <source>
        <dbReference type="PROSITE-ProRule" id="PRU01202"/>
    </source>
</evidence>
<evidence type="ECO:0000269" key="4">
    <source>
    </source>
</evidence>
<evidence type="ECO:0000269" key="5">
    <source>
    </source>
</evidence>
<evidence type="ECO:0000269" key="6">
    <source>
    </source>
</evidence>
<evidence type="ECO:0000269" key="7">
    <source>
    </source>
</evidence>
<evidence type="ECO:0000303" key="8">
    <source>
    </source>
</evidence>
<evidence type="ECO:0000305" key="9"/>
<evidence type="ECO:0000305" key="10">
    <source>
    </source>
</evidence>
<evidence type="ECO:0000305" key="11">
    <source>
    </source>
</evidence>
<evidence type="ECO:0000305" key="12">
    <source>
    </source>
</evidence>
<evidence type="ECO:0000305" key="13">
    <source>
    </source>
</evidence>
<evidence type="ECO:0007744" key="14">
    <source>
        <dbReference type="PDB" id="1G8M"/>
    </source>
</evidence>
<evidence type="ECO:0007744" key="15">
    <source>
        <dbReference type="PDB" id="1M9N"/>
    </source>
</evidence>
<evidence type="ECO:0007744" key="16">
    <source>
        <dbReference type="PDB" id="1OZ0"/>
    </source>
</evidence>
<evidence type="ECO:0007744" key="17">
    <source>
        <dbReference type="PDB" id="1THZ"/>
    </source>
</evidence>
<evidence type="ECO:0007744" key="18">
    <source>
        <dbReference type="PDB" id="2B1G"/>
    </source>
</evidence>
<evidence type="ECO:0007744" key="19">
    <source>
        <dbReference type="PDB" id="2B1I"/>
    </source>
</evidence>
<evidence type="ECO:0007744" key="20">
    <source>
        <dbReference type="PDB" id="2IU0"/>
    </source>
</evidence>
<evidence type="ECO:0007744" key="21">
    <source>
        <dbReference type="PDB" id="2IU3"/>
    </source>
</evidence>
<evidence type="ECO:0007829" key="22">
    <source>
        <dbReference type="PDB" id="1G8M"/>
    </source>
</evidence>
<evidence type="ECO:0007829" key="23">
    <source>
        <dbReference type="PDB" id="1M9N"/>
    </source>
</evidence>
<evidence type="ECO:0007829" key="24">
    <source>
        <dbReference type="PDB" id="1OZ0"/>
    </source>
</evidence>
<evidence type="ECO:0007829" key="25">
    <source>
        <dbReference type="PDB" id="2IU0"/>
    </source>
</evidence>
<feature type="chain" id="PRO_0000192155" description="Bifunctional purine biosynthesis protein ATIC">
    <location>
        <begin position="1"/>
        <end position="593"/>
    </location>
</feature>
<feature type="domain" description="MGS-like" evidence="3">
    <location>
        <begin position="1"/>
        <end position="147"/>
    </location>
</feature>
<feature type="region of interest" description="IMP cyclohydrolase" evidence="13">
    <location>
        <begin position="1"/>
        <end position="199"/>
    </location>
</feature>
<feature type="region of interest" description="AICAR formyltransferase" evidence="13">
    <location>
        <begin position="200"/>
        <end position="593"/>
    </location>
</feature>
<feature type="active site" description="Proton donor/acceptor; for FAICAR cyclization activity" evidence="1">
    <location>
        <position position="138"/>
    </location>
</feature>
<feature type="active site" description="Proton acceptor; for AICAR formyltransferase activity" evidence="1">
    <location>
        <position position="268"/>
    </location>
</feature>
<feature type="binding site" evidence="10 11 14 15">
    <location>
        <begin position="13"/>
        <end position="15"/>
    </location>
    <ligand>
        <name>IMP</name>
        <dbReference type="ChEBI" id="CHEBI:58053"/>
    </ligand>
</feature>
<feature type="binding site" evidence="10 11 14 15">
    <location>
        <begin position="35"/>
        <end position="38"/>
    </location>
    <ligand>
        <name>IMP</name>
        <dbReference type="ChEBI" id="CHEBI:58053"/>
    </ligand>
</feature>
<feature type="binding site" evidence="10 11 14 15">
    <location>
        <begin position="65"/>
        <end position="68"/>
    </location>
    <ligand>
        <name>IMP</name>
        <dbReference type="ChEBI" id="CHEBI:58053"/>
    </ligand>
</feature>
<feature type="binding site" evidence="11 15">
    <location>
        <begin position="102"/>
        <end position="103"/>
    </location>
    <ligand>
        <name>IMP</name>
        <dbReference type="ChEBI" id="CHEBI:58053"/>
    </ligand>
</feature>
<feature type="binding site" evidence="10 11 14 15">
    <location>
        <begin position="126"/>
        <end position="127"/>
    </location>
    <ligand>
        <name>IMP</name>
        <dbReference type="ChEBI" id="CHEBI:58053"/>
    </ligand>
</feature>
<feature type="binding site" description="in other chain" evidence="5 15">
    <location>
        <begin position="208"/>
        <end position="209"/>
    </location>
    <ligand>
        <name>5-amino-1-(5-phospho-beta-D-ribosyl)imidazole-4-carboxamide</name>
        <dbReference type="ChEBI" id="CHEBI:58475"/>
        <note>ligand shared between dimeric partners</note>
    </ligand>
</feature>
<feature type="binding site" description="in other chain" evidence="5 15">
    <location>
        <position position="268"/>
    </location>
    <ligand>
        <name>5-amino-1-(5-phospho-beta-D-ribosyl)imidazole-4-carboxamide</name>
        <dbReference type="ChEBI" id="CHEBI:58475"/>
        <note>ligand shared between dimeric partners</note>
    </ligand>
</feature>
<feature type="binding site" description="in other chain" evidence="5 15">
    <location>
        <position position="317"/>
    </location>
    <ligand>
        <name>5-amino-1-(5-phospho-beta-D-ribosyl)imidazole-4-carboxamide</name>
        <dbReference type="ChEBI" id="CHEBI:58475"/>
        <note>ligand shared between dimeric partners</note>
    </ligand>
</feature>
<feature type="binding site" description="in other chain" evidence="5 15">
    <location>
        <position position="340"/>
    </location>
    <ligand>
        <name>5-amino-1-(5-phospho-beta-D-ribosyl)imidazole-4-carboxamide</name>
        <dbReference type="ChEBI" id="CHEBI:58475"/>
        <note>ligand shared between dimeric partners</note>
    </ligand>
</feature>
<feature type="binding site" evidence="1">
    <location>
        <position position="432"/>
    </location>
    <ligand>
        <name>5-amino-1-(5-phospho-beta-D-ribosyl)imidazole-4-carboxamide</name>
        <dbReference type="ChEBI" id="CHEBI:58475"/>
        <note>ligand shared between dimeric partners</note>
    </ligand>
</feature>
<feature type="binding site" evidence="1">
    <location>
        <position position="452"/>
    </location>
    <ligand>
        <name>5-amino-1-(5-phospho-beta-D-ribosyl)imidazole-4-carboxamide</name>
        <dbReference type="ChEBI" id="CHEBI:58475"/>
        <note>ligand shared between dimeric partners</note>
    </ligand>
</feature>
<feature type="binding site" evidence="12 16">
    <location>
        <position position="453"/>
    </location>
    <ligand>
        <name>(6R)-10-formyltetrahydrofolate</name>
        <dbReference type="ChEBI" id="CHEBI:195366"/>
    </ligand>
</feature>
<feature type="binding site" evidence="5 15">
    <location>
        <position position="542"/>
    </location>
    <ligand>
        <name>5-amino-1-(5-phospho-beta-D-ribosyl)imidazole-4-carboxamide</name>
        <dbReference type="ChEBI" id="CHEBI:58475"/>
        <note>ligand shared between dimeric partners</note>
    </ligand>
</feature>
<feature type="binding site" evidence="12 16">
    <location>
        <position position="547"/>
    </location>
    <ligand>
        <name>(6R)-10-formyltetrahydrofolate</name>
        <dbReference type="ChEBI" id="CHEBI:195366"/>
    </ligand>
</feature>
<feature type="binding site" evidence="12 16">
    <location>
        <begin position="566"/>
        <end position="567"/>
    </location>
    <ligand>
        <name>(6R)-10-formyltetrahydrofolate</name>
        <dbReference type="ChEBI" id="CHEBI:195366"/>
    </ligand>
</feature>
<feature type="binding site" evidence="5 15">
    <location>
        <position position="589"/>
    </location>
    <ligand>
        <name>5-amino-1-(5-phospho-beta-D-ribosyl)imidazole-4-carboxamide</name>
        <dbReference type="ChEBI" id="CHEBI:58475"/>
        <note>ligand shared between dimeric partners</note>
    </ligand>
</feature>
<feature type="site" description="Transition state stabilizer" evidence="1">
    <location>
        <position position="267"/>
    </location>
</feature>
<feature type="modified residue" description="N6-acetyllysine" evidence="1">
    <location>
        <position position="200"/>
    </location>
</feature>
<feature type="strand" evidence="22">
    <location>
        <begin position="7"/>
        <end position="13"/>
    </location>
</feature>
<feature type="helix" evidence="22">
    <location>
        <begin position="18"/>
        <end position="27"/>
    </location>
</feature>
<feature type="strand" evidence="22">
    <location>
        <begin position="31"/>
        <end position="34"/>
    </location>
</feature>
<feature type="helix" evidence="22">
    <location>
        <begin position="36"/>
        <end position="44"/>
    </location>
</feature>
<feature type="strand" evidence="23">
    <location>
        <begin position="49"/>
        <end position="51"/>
    </location>
</feature>
<feature type="helix" evidence="22">
    <location>
        <begin position="52"/>
        <end position="56"/>
    </location>
</feature>
<feature type="helix" evidence="22">
    <location>
        <begin position="62"/>
        <end position="64"/>
    </location>
</feature>
<feature type="strand" evidence="22">
    <location>
        <begin position="66"/>
        <end position="68"/>
    </location>
</feature>
<feature type="helix" evidence="22">
    <location>
        <begin position="71"/>
        <end position="78"/>
    </location>
</feature>
<feature type="helix" evidence="22">
    <location>
        <begin position="83"/>
        <end position="91"/>
    </location>
</feature>
<feature type="strand" evidence="22">
    <location>
        <begin position="97"/>
        <end position="103"/>
    </location>
</feature>
<feature type="helix" evidence="22">
    <location>
        <begin position="107"/>
        <end position="111"/>
    </location>
</feature>
<feature type="strand" evidence="25">
    <location>
        <begin position="113"/>
        <end position="115"/>
    </location>
</feature>
<feature type="helix" evidence="22">
    <location>
        <begin position="118"/>
        <end position="122"/>
    </location>
</feature>
<feature type="helix" evidence="22">
    <location>
        <begin position="128"/>
        <end position="138"/>
    </location>
</feature>
<feature type="turn" evidence="22">
    <location>
        <begin position="139"/>
        <end position="142"/>
    </location>
</feature>
<feature type="strand" evidence="22">
    <location>
        <begin position="144"/>
        <end position="146"/>
    </location>
</feature>
<feature type="helix" evidence="22">
    <location>
        <begin position="149"/>
        <end position="151"/>
    </location>
</feature>
<feature type="helix" evidence="22">
    <location>
        <begin position="152"/>
        <end position="160"/>
    </location>
</feature>
<feature type="helix" evidence="22">
    <location>
        <begin position="169"/>
        <end position="198"/>
    </location>
</feature>
<feature type="turn" evidence="22">
    <location>
        <begin position="201"/>
        <end position="203"/>
    </location>
</feature>
<feature type="strand" evidence="22">
    <location>
        <begin position="204"/>
        <end position="208"/>
    </location>
</feature>
<feature type="strand" evidence="22">
    <location>
        <begin position="210"/>
        <end position="212"/>
    </location>
</feature>
<feature type="strand" evidence="22">
    <location>
        <begin position="218"/>
        <end position="221"/>
    </location>
</feature>
<feature type="strand" evidence="22">
    <location>
        <begin position="223"/>
        <end position="226"/>
    </location>
</feature>
<feature type="strand" evidence="22">
    <location>
        <begin position="228"/>
        <end position="234"/>
    </location>
</feature>
<feature type="helix" evidence="22">
    <location>
        <begin position="238"/>
        <end position="258"/>
    </location>
</feature>
<feature type="strand" evidence="22">
    <location>
        <begin position="262"/>
        <end position="267"/>
    </location>
</feature>
<feature type="strand" evidence="22">
    <location>
        <begin position="270"/>
        <end position="276"/>
    </location>
</feature>
<feature type="helix" evidence="22">
    <location>
        <begin position="282"/>
        <end position="287"/>
    </location>
</feature>
<feature type="turn" evidence="22">
    <location>
        <begin position="291"/>
        <end position="293"/>
    </location>
</feature>
<feature type="helix" evidence="22">
    <location>
        <begin position="294"/>
        <end position="296"/>
    </location>
</feature>
<feature type="helix" evidence="22">
    <location>
        <begin position="299"/>
        <end position="309"/>
    </location>
</feature>
<feature type="turn" evidence="22">
    <location>
        <begin position="312"/>
        <end position="317"/>
    </location>
</feature>
<feature type="strand" evidence="22">
    <location>
        <begin position="318"/>
        <end position="324"/>
    </location>
</feature>
<feature type="helix" evidence="22">
    <location>
        <begin position="328"/>
        <end position="335"/>
    </location>
</feature>
<feature type="strand" evidence="22">
    <location>
        <begin position="339"/>
        <end position="345"/>
    </location>
</feature>
<feature type="helix" evidence="22">
    <location>
        <begin position="349"/>
        <end position="357"/>
    </location>
</feature>
<feature type="helix" evidence="22">
    <location>
        <begin position="358"/>
        <end position="361"/>
    </location>
</feature>
<feature type="strand" evidence="22">
    <location>
        <begin position="364"/>
        <end position="368"/>
    </location>
</feature>
<feature type="strand" evidence="22">
    <location>
        <begin position="376"/>
        <end position="382"/>
    </location>
</feature>
<feature type="strand" evidence="22">
    <location>
        <begin position="385"/>
        <end position="390"/>
    </location>
</feature>
<feature type="helix" evidence="22">
    <location>
        <begin position="398"/>
        <end position="401"/>
    </location>
</feature>
<feature type="strand" evidence="22">
    <location>
        <begin position="406"/>
        <end position="408"/>
    </location>
</feature>
<feature type="helix" evidence="22">
    <location>
        <begin position="413"/>
        <end position="427"/>
    </location>
</feature>
<feature type="strand" evidence="24">
    <location>
        <begin position="429"/>
        <end position="432"/>
    </location>
</feature>
<feature type="strand" evidence="22">
    <location>
        <begin position="434"/>
        <end position="438"/>
    </location>
</feature>
<feature type="strand" evidence="22">
    <location>
        <begin position="441"/>
        <end position="446"/>
    </location>
</feature>
<feature type="helix" evidence="22">
    <location>
        <begin position="452"/>
        <end position="468"/>
    </location>
</feature>
<feature type="helix" evidence="22">
    <location>
        <begin position="472"/>
        <end position="475"/>
    </location>
</feature>
<feature type="helix" evidence="22">
    <location>
        <begin position="485"/>
        <end position="497"/>
    </location>
</feature>
<feature type="helix" evidence="22">
    <location>
        <begin position="504"/>
        <end position="510"/>
    </location>
</feature>
<feature type="strand" evidence="22">
    <location>
        <begin position="513"/>
        <end position="515"/>
    </location>
</feature>
<feature type="helix" evidence="22">
    <location>
        <begin position="522"/>
        <end position="529"/>
    </location>
</feature>
<feature type="strand" evidence="22">
    <location>
        <begin position="535"/>
        <end position="541"/>
    </location>
</feature>
<feature type="helix" evidence="22">
    <location>
        <begin position="547"/>
        <end position="553"/>
    </location>
</feature>
<feature type="turn" evidence="22">
    <location>
        <begin position="554"/>
        <end position="556"/>
    </location>
</feature>
<feature type="strand" evidence="22">
    <location>
        <begin position="557"/>
        <end position="563"/>
    </location>
</feature>
<feature type="helix" evidence="22">
    <location>
        <begin position="569"/>
        <end position="579"/>
    </location>
</feature>
<feature type="strand" evidence="22">
    <location>
        <begin position="582"/>
        <end position="587"/>
    </location>
</feature>
<keyword id="KW-0002">3D-structure</keyword>
<keyword id="KW-0007">Acetylation</keyword>
<keyword id="KW-0963">Cytoplasm</keyword>
<keyword id="KW-0378">Hydrolase</keyword>
<keyword id="KW-0511">Multifunctional enzyme</keyword>
<keyword id="KW-0658">Purine biosynthesis</keyword>
<keyword id="KW-1185">Reference proteome</keyword>
<keyword id="KW-0808">Transferase</keyword>
<reference key="1">
    <citation type="journal article" date="1991" name="Gene">
        <title>De novo purine nucleotide biosynthesis: cloning, sequencing and expression of a chicken PurH cDNA encoding 5-aminoimidazole-4-carboxamide-ribonucleotide transformylase-IMP cyclohydrolase.</title>
        <authorList>
            <person name="Ni L."/>
            <person name="Guan K."/>
            <person name="Zalkin H."/>
            <person name="Dixon J.E."/>
        </authorList>
    </citation>
    <scope>NUCLEOTIDE SEQUENCE [MRNA]</scope>
    <source>
        <tissue>Liver</tissue>
    </source>
</reference>
<reference evidence="14" key="2">
    <citation type="journal article" date="2001" name="Nat. Struct. Biol.">
        <title>Crystal structure of a bifunctional transformylase and cyclohydrolase enzyme in purine biosynthesis.</title>
        <authorList>
            <person name="Greasley S.E."/>
            <person name="Horton P."/>
            <person name="Ramcharan J."/>
            <person name="Beardsley G.P."/>
            <person name="Benkovic S.J."/>
            <person name="Wilson I.A."/>
        </authorList>
    </citation>
    <scope>X-RAY CRYSTALLOGRAPHY (1.75 ANGSTROMS) IN COMPLEX WITH GMP</scope>
    <scope>SUBUNIT</scope>
</reference>
<reference evidence="15" key="3">
    <citation type="journal article" date="2002" name="Biochemistry">
        <title>Structural insights into the avian AICAR transformylase mechanism.</title>
        <authorList>
            <person name="Wolan D.W."/>
            <person name="Greasley S.E."/>
            <person name="Beardsley G.P."/>
            <person name="Wilson I.A."/>
        </authorList>
    </citation>
    <scope>X-RAY CRYSTALLOGRAPHY (1.93 ANGSTROMS) IN COMPLEX WITH AICAR AND XMP</scope>
    <scope>FUNCTION</scope>
    <scope>SUBUNIT</scope>
    <scope>PATHWAY</scope>
</reference>
<reference evidence="16" key="4">
    <citation type="journal article" date="2003" name="Biochemistry">
        <title>Structure of avian AICAR transformylase with a multisubstrate adduct inhibitor beta-DADF identifies the folate binding site.</title>
        <authorList>
            <person name="Wolan D.W."/>
            <person name="Greasley S.E."/>
            <person name="Wall M.J."/>
            <person name="Benkovic S.J."/>
            <person name="Wilson I.A."/>
        </authorList>
    </citation>
    <scope>X-RAY CRYSTALLOGRAPHY (2.50 ANGSTROMS) IN COMPLEX WITH BETA-DADF INHIBITOR</scope>
</reference>
<reference evidence="17" key="5">
    <citation type="journal article" date="2004" name="J. Biol. Chem.">
        <title>Crystal structure of avian aminoimidazole-4-carboxamide ribonucleotide transformylase in complex with a novel non-folate inhibitor identified by virtual ligand screening.</title>
        <authorList>
            <person name="Xu L."/>
            <person name="Li C."/>
            <person name="Olson A.J."/>
            <person name="Wilson I.A."/>
        </authorList>
    </citation>
    <scope>X-RAY CRYSTALLOGRAPHY (1.80 ANGSTROMS) IN COMPLEX WITH 326203-A INHIBITOR</scope>
    <scope>ACTIVITY REGULATION</scope>
</reference>
<reference evidence="18 19 20 21" key="6">
    <citation type="journal article" date="2007" name="J. Biol. Chem.">
        <title>Structure-based design, synthesis, evaluation, and crystal structures of transition state analogue inhibitors of inosine monophosphate cyclohydrolase.</title>
        <authorList>
            <person name="Xu L."/>
            <person name="Chong Y."/>
            <person name="Hwang I."/>
            <person name="D'Onofrio A."/>
            <person name="Amore K."/>
            <person name="Beardsley G.P."/>
            <person name="Li C."/>
            <person name="Olson A.J."/>
            <person name="Boger D.L."/>
            <person name="Wilson I.A."/>
        </authorList>
    </citation>
    <scope>X-RAY CRYSTALLOGRAPHY (2.02 ANGSTROMS) IN COMPLEXES WITH TRANSITION STATE ANALOG INHIBITORS</scope>
    <scope>ACTIVITY REGULATION</scope>
</reference>
<comment type="function">
    <text evidence="1 5">Bifunctional enzyme that catalyzes the last two steps of purine biosynthesis (PubMed:12501179). Acts as a transformylase that incorporates a formyl group to the AMP analog AICAR (5-amino-1-(5-phospho-beta-D-ribosyl)imidazole-4-carboxamide) to produce the intermediate formyl-AICAR (FAICAR) (PubMed:12501179). Can use both 10-formyldihydrofolate and 10-formyltetrahydrofolate as the formyl donor in this reaction. Also catalyzes the cyclization of FAICAR to inosine monophosphate (IMP). Promotes insulin receptor/INSR autophosphorylation and is involved in INSR internalization (By similarity).</text>
</comment>
<comment type="catalytic activity">
    <reaction evidence="5">
        <text>(6R)-10-formyltetrahydrofolate + 5-amino-1-(5-phospho-beta-D-ribosyl)imidazole-4-carboxamide = 5-formamido-1-(5-phospho-D-ribosyl)imidazole-4-carboxamide + (6S)-5,6,7,8-tetrahydrofolate</text>
        <dbReference type="Rhea" id="RHEA:22192"/>
        <dbReference type="ChEBI" id="CHEBI:57453"/>
        <dbReference type="ChEBI" id="CHEBI:58467"/>
        <dbReference type="ChEBI" id="CHEBI:58475"/>
        <dbReference type="ChEBI" id="CHEBI:195366"/>
        <dbReference type="EC" id="2.1.2.3"/>
    </reaction>
    <physiologicalReaction direction="left-to-right" evidence="11">
        <dbReference type="Rhea" id="RHEA:22193"/>
    </physiologicalReaction>
</comment>
<comment type="catalytic activity">
    <reaction evidence="1">
        <text>10-formyldihydrofolate + 5-amino-1-(5-phospho-beta-D-ribosyl)imidazole-4-carboxamide = 5-formamido-1-(5-phospho-D-ribosyl)imidazole-4-carboxamide + 7,8-dihydrofolate</text>
        <dbReference type="Rhea" id="RHEA:59144"/>
        <dbReference type="ChEBI" id="CHEBI:57451"/>
        <dbReference type="ChEBI" id="CHEBI:57452"/>
        <dbReference type="ChEBI" id="CHEBI:58467"/>
        <dbReference type="ChEBI" id="CHEBI:58475"/>
    </reaction>
    <physiologicalReaction direction="left-to-right" evidence="1">
        <dbReference type="Rhea" id="RHEA:59145"/>
    </physiologicalReaction>
</comment>
<comment type="catalytic activity">
    <reaction evidence="1">
        <text>IMP + H2O = 5-formamido-1-(5-phospho-D-ribosyl)imidazole-4-carboxamide</text>
        <dbReference type="Rhea" id="RHEA:18445"/>
        <dbReference type="ChEBI" id="CHEBI:15377"/>
        <dbReference type="ChEBI" id="CHEBI:58053"/>
        <dbReference type="ChEBI" id="CHEBI:58467"/>
        <dbReference type="EC" id="3.5.4.10"/>
    </reaction>
    <physiologicalReaction direction="right-to-left" evidence="1">
        <dbReference type="Rhea" id="RHEA:18447"/>
    </physiologicalReaction>
</comment>
<comment type="activity regulation">
    <text evidence="1 6 7">AMP and XMP inhibit AICAR formyltransferase activity (By similarity). AICAR formyltransferase activity is competitively inhibited by 2-[5-hydroxy-3-methyl-1-(2-methyl-4-sulfo-phenyl)-1H-pyrazol-4-ylazo]-4-sulfo-benzoic acid (326203-A) (PubMed:15355974). FAICAR cyclization is competitively inhibited by 1,5-dihydroimidazo[4,5-c][1,2,6]thiadiazin-4(3H)-one-2,2-dioxide and the corresponding nucleoside and nucleoside monophosphate (PubMed:17324932).</text>
</comment>
<comment type="pathway">
    <text evidence="5">Purine metabolism; IMP biosynthesis via de novo pathway; 5-formamido-1-(5-phospho-D-ribosyl)imidazole-4-carboxamide from 5-amino-1-(5-phospho-D-ribosyl)imidazole-4-carboxamide (10-formyl THF route): step 1/1.</text>
</comment>
<comment type="pathway">
    <text evidence="1">Purine metabolism; IMP biosynthesis via de novo pathway; IMP from 5-formamido-1-(5-phospho-D-ribosyl)imidazole-4-carboxamide: step 1/1.</text>
</comment>
<comment type="subunit">
    <text evidence="1 4 5">Homodimer (PubMed:11323713, PubMed:12501179). Associates with internalized INSR complexes on Golgi/endosomal membranes. Interacts with INSR; ATIC together with PRKAA2/AMPK2 and HACD3/PTPLAD1 is proposed to be part of a signaling network regulating INSR autophosphorylation and endocytosis (By similarity).</text>
</comment>
<comment type="subcellular location">
    <subcellularLocation>
        <location evidence="2">Cytoplasm</location>
        <location evidence="2">Cytosol</location>
    </subcellularLocation>
</comment>
<comment type="domain">
    <text evidence="13">The IMP cyclohydrolase activity resides in the N-terminal region.</text>
</comment>
<comment type="miscellaneous">
    <text evidence="1">The de novo purine synthesis pathway includes 10 sequential steps, beginning with phosphoribosyl pyrophosphate and ending with inosine monophosphate (IMP), the first purine compound of the pathway.</text>
</comment>
<comment type="similarity">
    <text evidence="9">Belongs to the PurH family.</text>
</comment>
<name>PUR9_CHICK</name>
<protein>
    <recommendedName>
        <fullName>Bifunctional purine biosynthesis protein ATIC</fullName>
    </recommendedName>
    <alternativeName>
        <fullName evidence="8">AICAR transformylase/inosine monophosphate cyclohydrolase</fullName>
        <shortName evidence="8">ATIC</shortName>
    </alternativeName>
    <domain>
        <recommendedName>
            <fullName>Phosphoribosylaminoimidazolecarboxamide formyltransferase</fullName>
            <ecNumber evidence="5">2.1.2.3</ecNumber>
        </recommendedName>
        <alternativeName>
            <fullName>5-aminoimidazole-4-carboxamide ribonucleotide formyltransferase</fullName>
            <shortName>AICAR formyltransferase</shortName>
        </alternativeName>
        <alternativeName>
            <fullName>AICAR transformylase</fullName>
        </alternativeName>
    </domain>
    <domain>
        <recommendedName>
            <fullName evidence="9">Inosine 5'-monophosphate cyclohydrolase</fullName>
            <shortName evidence="9">IMP cyclohydrolase</shortName>
            <ecNumber evidence="1">3.5.4.10</ecNumber>
        </recommendedName>
        <alternativeName>
            <fullName>IMP synthase</fullName>
        </alternativeName>
        <alternativeName>
            <fullName>Inosinicase</fullName>
        </alternativeName>
    </domain>
</protein>
<sequence length="593" mass="64415">MAARQQLALLSVSEKAGLVEFARSLNALGLGLIASGGTATALRDAGLPVRDVSDLTGFPEMLGGRVKTLHPAVHAGILARNIPEDNADMNKQDFSLVRVVVCNLYPFVKTVSSPGVTVPEAVEKIDIGGVALLRAAAKNHARVTVVCDPADYSSVAKEMAASKDKDTSVETRRHLALKAFTHTAQYDAAISDYFRKEYSKGVSQLPLRYGMNPHQSPAQLYTTRPKLPLTVVNGSPGFINLCDALNAWQLVKELKQALGIPAAASFKHVSPAGAAVGIPLSEEEAQVCMVHDLHKTLTPLASAYARSRGADRMSSFGDFIALSDICDVPTAKIISREVSDGVVAPGYEEEALKILSKKKNGGYCVLQMDPNYEPDDNEIRTLYGLQLMQKRNNAVIDRSLFKNIVTKNKTLPESAVRDLIVASIAVKYTQSNSVCYAKDGQVIGIGAGQQSRIHCTRLAGDKANSWWLRHHPRVLSMKFKAGVKRAEVSNAIDQYVTGTIGEDEDLVKWQAMFEEVPAQLTEAEKKQWIAKLTAVSLSSDAFFPFRDNVDRAKRIGVQFIVAPSGSAADEVVIEACNELGITLIHTNLRLFHH</sequence>
<dbReference type="EC" id="2.1.2.3" evidence="5"/>
<dbReference type="EC" id="3.5.4.10" evidence="1"/>
<dbReference type="EMBL" id="S64492">
    <property type="protein sequence ID" value="AAB20309.1"/>
    <property type="molecule type" value="mRNA"/>
</dbReference>
<dbReference type="PIR" id="JQ1281">
    <property type="entry name" value="DTCHPH"/>
</dbReference>
<dbReference type="RefSeq" id="NP_990509.1">
    <property type="nucleotide sequence ID" value="NM_205178.1"/>
</dbReference>
<dbReference type="PDB" id="1G8M">
    <property type="method" value="X-ray"/>
    <property type="resolution" value="1.75 A"/>
    <property type="chains" value="A/B=1-593"/>
</dbReference>
<dbReference type="PDB" id="1M9N">
    <property type="method" value="X-ray"/>
    <property type="resolution" value="1.93 A"/>
    <property type="chains" value="A/B=1-593"/>
</dbReference>
<dbReference type="PDB" id="1OZ0">
    <property type="method" value="X-ray"/>
    <property type="resolution" value="2.50 A"/>
    <property type="chains" value="A/B=1-593"/>
</dbReference>
<dbReference type="PDB" id="1THZ">
    <property type="method" value="X-ray"/>
    <property type="resolution" value="1.80 A"/>
    <property type="chains" value="A/B=1-593"/>
</dbReference>
<dbReference type="PDB" id="2B1G">
    <property type="method" value="X-ray"/>
    <property type="resolution" value="2.10 A"/>
    <property type="chains" value="A/B/C/D=1-593"/>
</dbReference>
<dbReference type="PDB" id="2B1I">
    <property type="method" value="X-ray"/>
    <property type="resolution" value="2.02 A"/>
    <property type="chains" value="A/B=1-593"/>
</dbReference>
<dbReference type="PDB" id="2IU0">
    <property type="method" value="X-ray"/>
    <property type="resolution" value="2.53 A"/>
    <property type="chains" value="A/B=1-593"/>
</dbReference>
<dbReference type="PDB" id="2IU3">
    <property type="method" value="X-ray"/>
    <property type="resolution" value="2.90 A"/>
    <property type="chains" value="A/B=1-593"/>
</dbReference>
<dbReference type="PDBsum" id="1G8M"/>
<dbReference type="PDBsum" id="1M9N"/>
<dbReference type="PDBsum" id="1OZ0"/>
<dbReference type="PDBsum" id="1THZ"/>
<dbReference type="PDBsum" id="2B1G"/>
<dbReference type="PDBsum" id="2B1I"/>
<dbReference type="PDBsum" id="2IU0"/>
<dbReference type="PDBsum" id="2IU3"/>
<dbReference type="SMR" id="P31335"/>
<dbReference type="FunCoup" id="P31335">
    <property type="interactions" value="2543"/>
</dbReference>
<dbReference type="STRING" id="9031.ENSGALP00000061123"/>
<dbReference type="PaxDb" id="9031-ENSGALP00000005643"/>
<dbReference type="GeneID" id="396091"/>
<dbReference type="KEGG" id="gga:396091"/>
<dbReference type="CTD" id="471"/>
<dbReference type="VEuPathDB" id="HostDB:geneid_396091"/>
<dbReference type="eggNOG" id="KOG2555">
    <property type="taxonomic scope" value="Eukaryota"/>
</dbReference>
<dbReference type="InParanoid" id="P31335"/>
<dbReference type="OrthoDB" id="6017153at2759"/>
<dbReference type="PhylomeDB" id="P31335"/>
<dbReference type="BRENDA" id="2.1.2.3">
    <property type="organism ID" value="1306"/>
</dbReference>
<dbReference type="BRENDA" id="3.5.4.10">
    <property type="organism ID" value="1306"/>
</dbReference>
<dbReference type="Reactome" id="R-GGA-419140">
    <property type="pathway name" value="De novo synthesis of IMP"/>
</dbReference>
<dbReference type="SABIO-RK" id="P31335"/>
<dbReference type="UniPathway" id="UPA00074">
    <property type="reaction ID" value="UER00133"/>
</dbReference>
<dbReference type="UniPathway" id="UPA00074">
    <property type="reaction ID" value="UER00135"/>
</dbReference>
<dbReference type="EvolutionaryTrace" id="P31335"/>
<dbReference type="PRO" id="PR:P31335"/>
<dbReference type="Proteomes" id="UP000000539">
    <property type="component" value="Unassembled WGS sequence"/>
</dbReference>
<dbReference type="GO" id="GO:0005829">
    <property type="term" value="C:cytosol"/>
    <property type="evidence" value="ECO:0000318"/>
    <property type="project" value="GO_Central"/>
</dbReference>
<dbReference type="GO" id="GO:0003937">
    <property type="term" value="F:IMP cyclohydrolase activity"/>
    <property type="evidence" value="ECO:0000318"/>
    <property type="project" value="GO_Central"/>
</dbReference>
<dbReference type="GO" id="GO:0004643">
    <property type="term" value="F:phosphoribosylaminoimidazolecarboxamide formyltransferase activity"/>
    <property type="evidence" value="ECO:0000318"/>
    <property type="project" value="GO_Central"/>
</dbReference>
<dbReference type="GO" id="GO:0042803">
    <property type="term" value="F:protein homodimerization activity"/>
    <property type="evidence" value="ECO:0000353"/>
    <property type="project" value="UniProtKB"/>
</dbReference>
<dbReference type="GO" id="GO:0006189">
    <property type="term" value="P:'de novo' IMP biosynthetic process"/>
    <property type="evidence" value="ECO:0000318"/>
    <property type="project" value="GO_Central"/>
</dbReference>
<dbReference type="CDD" id="cd01421">
    <property type="entry name" value="IMPCH"/>
    <property type="match status" value="1"/>
</dbReference>
<dbReference type="FunFam" id="3.40.140.20:FF:000003">
    <property type="entry name" value="Bifunctional purine biosynthesis protein"/>
    <property type="match status" value="1"/>
</dbReference>
<dbReference type="FunFam" id="3.40.50.1380:FF:000003">
    <property type="entry name" value="Bifunctional purine biosynthesis protein"/>
    <property type="match status" value="1"/>
</dbReference>
<dbReference type="FunFam" id="1.10.287.440:FF:000001">
    <property type="entry name" value="Bifunctional purine biosynthesis protein PURH"/>
    <property type="match status" value="1"/>
</dbReference>
<dbReference type="Gene3D" id="1.10.287.440">
    <property type="match status" value="1"/>
</dbReference>
<dbReference type="Gene3D" id="3.40.140.20">
    <property type="match status" value="2"/>
</dbReference>
<dbReference type="Gene3D" id="3.40.50.1380">
    <property type="entry name" value="Methylglyoxal synthase-like domain"/>
    <property type="match status" value="1"/>
</dbReference>
<dbReference type="HAMAP" id="MF_00139">
    <property type="entry name" value="PurH"/>
    <property type="match status" value="1"/>
</dbReference>
<dbReference type="InterPro" id="IPR024051">
    <property type="entry name" value="AICAR_Tfase_dup_dom_sf"/>
</dbReference>
<dbReference type="InterPro" id="IPR024050">
    <property type="entry name" value="AICAR_Tfase_insert_dom_sf"/>
</dbReference>
<dbReference type="InterPro" id="IPR016193">
    <property type="entry name" value="Cytidine_deaminase-like"/>
</dbReference>
<dbReference type="InterPro" id="IPR011607">
    <property type="entry name" value="MGS-like_dom"/>
</dbReference>
<dbReference type="InterPro" id="IPR036914">
    <property type="entry name" value="MGS-like_dom_sf"/>
</dbReference>
<dbReference type="InterPro" id="IPR002695">
    <property type="entry name" value="PurH-like"/>
</dbReference>
<dbReference type="NCBIfam" id="NF005492">
    <property type="entry name" value="PRK07106.1"/>
    <property type="match status" value="1"/>
</dbReference>
<dbReference type="NCBIfam" id="TIGR00355">
    <property type="entry name" value="purH"/>
    <property type="match status" value="1"/>
</dbReference>
<dbReference type="PANTHER" id="PTHR11692:SF0">
    <property type="entry name" value="BIFUNCTIONAL PURINE BIOSYNTHESIS PROTEIN ATIC"/>
    <property type="match status" value="1"/>
</dbReference>
<dbReference type="PANTHER" id="PTHR11692">
    <property type="entry name" value="BIFUNCTIONAL PURINE BIOSYNTHESIS PROTEIN PURH"/>
    <property type="match status" value="1"/>
</dbReference>
<dbReference type="Pfam" id="PF01808">
    <property type="entry name" value="AICARFT_IMPCHas"/>
    <property type="match status" value="1"/>
</dbReference>
<dbReference type="Pfam" id="PF02142">
    <property type="entry name" value="MGS"/>
    <property type="match status" value="1"/>
</dbReference>
<dbReference type="PIRSF" id="PIRSF000414">
    <property type="entry name" value="AICARFT_IMPCHas"/>
    <property type="match status" value="1"/>
</dbReference>
<dbReference type="SMART" id="SM00798">
    <property type="entry name" value="AICARFT_IMPCHas"/>
    <property type="match status" value="1"/>
</dbReference>
<dbReference type="SMART" id="SM00851">
    <property type="entry name" value="MGS"/>
    <property type="match status" value="1"/>
</dbReference>
<dbReference type="SUPFAM" id="SSF53927">
    <property type="entry name" value="Cytidine deaminase-like"/>
    <property type="match status" value="1"/>
</dbReference>
<dbReference type="SUPFAM" id="SSF52335">
    <property type="entry name" value="Methylglyoxal synthase-like"/>
    <property type="match status" value="1"/>
</dbReference>
<dbReference type="PROSITE" id="PS51855">
    <property type="entry name" value="MGS"/>
    <property type="match status" value="1"/>
</dbReference>
<accession>P31335</accession>
<gene>
    <name type="primary">ATIC</name>
    <name type="synonym">PURH</name>
</gene>
<proteinExistence type="evidence at protein level"/>
<organism>
    <name type="scientific">Gallus gallus</name>
    <name type="common">Chicken</name>
    <dbReference type="NCBI Taxonomy" id="9031"/>
    <lineage>
        <taxon>Eukaryota</taxon>
        <taxon>Metazoa</taxon>
        <taxon>Chordata</taxon>
        <taxon>Craniata</taxon>
        <taxon>Vertebrata</taxon>
        <taxon>Euteleostomi</taxon>
        <taxon>Archelosauria</taxon>
        <taxon>Archosauria</taxon>
        <taxon>Dinosauria</taxon>
        <taxon>Saurischia</taxon>
        <taxon>Theropoda</taxon>
        <taxon>Coelurosauria</taxon>
        <taxon>Aves</taxon>
        <taxon>Neognathae</taxon>
        <taxon>Galloanserae</taxon>
        <taxon>Galliformes</taxon>
        <taxon>Phasianidae</taxon>
        <taxon>Phasianinae</taxon>
        <taxon>Gallus</taxon>
    </lineage>
</organism>